<reference key="1">
    <citation type="journal article" date="2006" name="Proc. Natl. Acad. Sci. U.S.A.">
        <title>Comparative genomics of the lactic acid bacteria.</title>
        <authorList>
            <person name="Makarova K.S."/>
            <person name="Slesarev A."/>
            <person name="Wolf Y.I."/>
            <person name="Sorokin A."/>
            <person name="Mirkin B."/>
            <person name="Koonin E.V."/>
            <person name="Pavlov A."/>
            <person name="Pavlova N."/>
            <person name="Karamychev V."/>
            <person name="Polouchine N."/>
            <person name="Shakhova V."/>
            <person name="Grigoriev I."/>
            <person name="Lou Y."/>
            <person name="Rohksar D."/>
            <person name="Lucas S."/>
            <person name="Huang K."/>
            <person name="Goodstein D.M."/>
            <person name="Hawkins T."/>
            <person name="Plengvidhya V."/>
            <person name="Welker D."/>
            <person name="Hughes J."/>
            <person name="Goh Y."/>
            <person name="Benson A."/>
            <person name="Baldwin K."/>
            <person name="Lee J.-H."/>
            <person name="Diaz-Muniz I."/>
            <person name="Dosti B."/>
            <person name="Smeianov V."/>
            <person name="Wechter W."/>
            <person name="Barabote R."/>
            <person name="Lorca G."/>
            <person name="Altermann E."/>
            <person name="Barrangou R."/>
            <person name="Ganesan B."/>
            <person name="Xie Y."/>
            <person name="Rawsthorne H."/>
            <person name="Tamir D."/>
            <person name="Parker C."/>
            <person name="Breidt F."/>
            <person name="Broadbent J.R."/>
            <person name="Hutkins R."/>
            <person name="O'Sullivan D."/>
            <person name="Steele J."/>
            <person name="Unlu G."/>
            <person name="Saier M.H. Jr."/>
            <person name="Klaenhammer T."/>
            <person name="Richardson P."/>
            <person name="Kozyavkin S."/>
            <person name="Weimer B.C."/>
            <person name="Mills D.A."/>
        </authorList>
    </citation>
    <scope>NUCLEOTIDE SEQUENCE [LARGE SCALE GENOMIC DNA]</scope>
    <source>
        <strain>ATCC BAA-365 / Lb-18</strain>
    </source>
</reference>
<accession>Q04C03</accession>
<feature type="chain" id="PRO_1000052755" description="Large ribosomal subunit protein uL5">
    <location>
        <begin position="1"/>
        <end position="180"/>
    </location>
</feature>
<name>RL5_LACDB</name>
<protein>
    <recommendedName>
        <fullName evidence="1">Large ribosomal subunit protein uL5</fullName>
    </recommendedName>
    <alternativeName>
        <fullName evidence="2">50S ribosomal protein L5</fullName>
    </alternativeName>
</protein>
<proteinExistence type="inferred from homology"/>
<gene>
    <name evidence="1" type="primary">rplE</name>
    <name type="ordered locus">LBUL_0362</name>
</gene>
<keyword id="KW-0687">Ribonucleoprotein</keyword>
<keyword id="KW-0689">Ribosomal protein</keyword>
<keyword id="KW-0694">RNA-binding</keyword>
<keyword id="KW-0699">rRNA-binding</keyword>
<keyword id="KW-0820">tRNA-binding</keyword>
<evidence type="ECO:0000255" key="1">
    <source>
        <dbReference type="HAMAP-Rule" id="MF_01333"/>
    </source>
</evidence>
<evidence type="ECO:0000305" key="2"/>
<sequence>MANSFATKYNEEIVPALTKKFNYTSSMQVPKIDKIVLNMGVGDAVANAKNLDEAVEELTLISGQKPMITKAKKSIANFRLREGMSIGAKVTLRGDRMYDFLSKLINVSLPRVRDFRGVSTRSFDGRGNYTLGVKEQLIFPEIDFDKVNRTRGLDIVIVTTAQTDEEARELLTQFGMPFAK</sequence>
<organism>
    <name type="scientific">Lactobacillus delbrueckii subsp. bulgaricus (strain ATCC BAA-365 / Lb-18)</name>
    <dbReference type="NCBI Taxonomy" id="321956"/>
    <lineage>
        <taxon>Bacteria</taxon>
        <taxon>Bacillati</taxon>
        <taxon>Bacillota</taxon>
        <taxon>Bacilli</taxon>
        <taxon>Lactobacillales</taxon>
        <taxon>Lactobacillaceae</taxon>
        <taxon>Lactobacillus</taxon>
    </lineage>
</organism>
<comment type="function">
    <text evidence="1">This is one of the proteins that bind and probably mediate the attachment of the 5S RNA into the large ribosomal subunit, where it forms part of the central protuberance. In the 70S ribosome it contacts protein S13 of the 30S subunit (bridge B1b), connecting the 2 subunits; this bridge is implicated in subunit movement. Contacts the P site tRNA; the 5S rRNA and some of its associated proteins might help stabilize positioning of ribosome-bound tRNAs.</text>
</comment>
<comment type="subunit">
    <text evidence="1">Part of the 50S ribosomal subunit; part of the 5S rRNA/L5/L18/L25 subcomplex. Contacts the 5S rRNA and the P site tRNA. Forms a bridge to the 30S subunit in the 70S ribosome.</text>
</comment>
<comment type="similarity">
    <text evidence="1">Belongs to the universal ribosomal protein uL5 family.</text>
</comment>
<dbReference type="EMBL" id="CP000412">
    <property type="protein sequence ID" value="ABJ58019.1"/>
    <property type="molecule type" value="Genomic_DNA"/>
</dbReference>
<dbReference type="RefSeq" id="WP_003620844.1">
    <property type="nucleotide sequence ID" value="NC_008529.1"/>
</dbReference>
<dbReference type="SMR" id="Q04C03"/>
<dbReference type="KEGG" id="lbu:LBUL_0362"/>
<dbReference type="HOGENOM" id="CLU_061015_2_1_9"/>
<dbReference type="BioCyc" id="LDEL321956:LBUL_RS01695-MONOMER"/>
<dbReference type="GO" id="GO:1990904">
    <property type="term" value="C:ribonucleoprotein complex"/>
    <property type="evidence" value="ECO:0007669"/>
    <property type="project" value="UniProtKB-KW"/>
</dbReference>
<dbReference type="GO" id="GO:0005840">
    <property type="term" value="C:ribosome"/>
    <property type="evidence" value="ECO:0007669"/>
    <property type="project" value="UniProtKB-KW"/>
</dbReference>
<dbReference type="GO" id="GO:0019843">
    <property type="term" value="F:rRNA binding"/>
    <property type="evidence" value="ECO:0007669"/>
    <property type="project" value="UniProtKB-UniRule"/>
</dbReference>
<dbReference type="GO" id="GO:0003735">
    <property type="term" value="F:structural constituent of ribosome"/>
    <property type="evidence" value="ECO:0007669"/>
    <property type="project" value="InterPro"/>
</dbReference>
<dbReference type="GO" id="GO:0000049">
    <property type="term" value="F:tRNA binding"/>
    <property type="evidence" value="ECO:0007669"/>
    <property type="project" value="UniProtKB-UniRule"/>
</dbReference>
<dbReference type="GO" id="GO:0006412">
    <property type="term" value="P:translation"/>
    <property type="evidence" value="ECO:0007669"/>
    <property type="project" value="UniProtKB-UniRule"/>
</dbReference>
<dbReference type="FunFam" id="3.30.1440.10:FF:000001">
    <property type="entry name" value="50S ribosomal protein L5"/>
    <property type="match status" value="1"/>
</dbReference>
<dbReference type="Gene3D" id="3.30.1440.10">
    <property type="match status" value="1"/>
</dbReference>
<dbReference type="HAMAP" id="MF_01333_B">
    <property type="entry name" value="Ribosomal_uL5_B"/>
    <property type="match status" value="1"/>
</dbReference>
<dbReference type="InterPro" id="IPR002132">
    <property type="entry name" value="Ribosomal_uL5"/>
</dbReference>
<dbReference type="InterPro" id="IPR020930">
    <property type="entry name" value="Ribosomal_uL5_bac-type"/>
</dbReference>
<dbReference type="InterPro" id="IPR031309">
    <property type="entry name" value="Ribosomal_uL5_C"/>
</dbReference>
<dbReference type="InterPro" id="IPR020929">
    <property type="entry name" value="Ribosomal_uL5_CS"/>
</dbReference>
<dbReference type="InterPro" id="IPR022803">
    <property type="entry name" value="Ribosomal_uL5_dom_sf"/>
</dbReference>
<dbReference type="InterPro" id="IPR031310">
    <property type="entry name" value="Ribosomal_uL5_N"/>
</dbReference>
<dbReference type="NCBIfam" id="NF000585">
    <property type="entry name" value="PRK00010.1"/>
    <property type="match status" value="1"/>
</dbReference>
<dbReference type="PANTHER" id="PTHR11994">
    <property type="entry name" value="60S RIBOSOMAL PROTEIN L11-RELATED"/>
    <property type="match status" value="1"/>
</dbReference>
<dbReference type="Pfam" id="PF00281">
    <property type="entry name" value="Ribosomal_L5"/>
    <property type="match status" value="1"/>
</dbReference>
<dbReference type="Pfam" id="PF00673">
    <property type="entry name" value="Ribosomal_L5_C"/>
    <property type="match status" value="1"/>
</dbReference>
<dbReference type="PIRSF" id="PIRSF002161">
    <property type="entry name" value="Ribosomal_L5"/>
    <property type="match status" value="1"/>
</dbReference>
<dbReference type="SUPFAM" id="SSF55282">
    <property type="entry name" value="RL5-like"/>
    <property type="match status" value="1"/>
</dbReference>
<dbReference type="PROSITE" id="PS00358">
    <property type="entry name" value="RIBOSOMAL_L5"/>
    <property type="match status" value="1"/>
</dbReference>